<dbReference type="EC" id="2.1.3.2" evidence="1"/>
<dbReference type="EMBL" id="CP000086">
    <property type="protein sequence ID" value="ABC38822.1"/>
    <property type="molecule type" value="Genomic_DNA"/>
</dbReference>
<dbReference type="RefSeq" id="WP_009889576.1">
    <property type="nucleotide sequence ID" value="NZ_CP008785.1"/>
</dbReference>
<dbReference type="SMR" id="Q2SYI8"/>
<dbReference type="GeneID" id="45121206"/>
<dbReference type="KEGG" id="bte:BTH_I1465"/>
<dbReference type="HOGENOM" id="CLU_043846_2_0_4"/>
<dbReference type="UniPathway" id="UPA00070">
    <property type="reaction ID" value="UER00116"/>
</dbReference>
<dbReference type="Proteomes" id="UP000001930">
    <property type="component" value="Chromosome I"/>
</dbReference>
<dbReference type="GO" id="GO:0005829">
    <property type="term" value="C:cytosol"/>
    <property type="evidence" value="ECO:0007669"/>
    <property type="project" value="TreeGrafter"/>
</dbReference>
<dbReference type="GO" id="GO:0016597">
    <property type="term" value="F:amino acid binding"/>
    <property type="evidence" value="ECO:0007669"/>
    <property type="project" value="InterPro"/>
</dbReference>
<dbReference type="GO" id="GO:0004070">
    <property type="term" value="F:aspartate carbamoyltransferase activity"/>
    <property type="evidence" value="ECO:0007669"/>
    <property type="project" value="UniProtKB-UniRule"/>
</dbReference>
<dbReference type="GO" id="GO:0006207">
    <property type="term" value="P:'de novo' pyrimidine nucleobase biosynthetic process"/>
    <property type="evidence" value="ECO:0007669"/>
    <property type="project" value="InterPro"/>
</dbReference>
<dbReference type="GO" id="GO:0044205">
    <property type="term" value="P:'de novo' UMP biosynthetic process"/>
    <property type="evidence" value="ECO:0007669"/>
    <property type="project" value="UniProtKB-UniRule"/>
</dbReference>
<dbReference type="GO" id="GO:0006520">
    <property type="term" value="P:amino acid metabolic process"/>
    <property type="evidence" value="ECO:0007669"/>
    <property type="project" value="InterPro"/>
</dbReference>
<dbReference type="FunFam" id="3.40.50.1370:FF:000007">
    <property type="entry name" value="Aspartate carbamoyltransferase"/>
    <property type="match status" value="1"/>
</dbReference>
<dbReference type="Gene3D" id="3.40.50.1370">
    <property type="entry name" value="Aspartate/ornithine carbamoyltransferase"/>
    <property type="match status" value="2"/>
</dbReference>
<dbReference type="HAMAP" id="MF_00001">
    <property type="entry name" value="Asp_carb_tr"/>
    <property type="match status" value="1"/>
</dbReference>
<dbReference type="InterPro" id="IPR006132">
    <property type="entry name" value="Asp/Orn_carbamoyltranf_P-bd"/>
</dbReference>
<dbReference type="InterPro" id="IPR006130">
    <property type="entry name" value="Asp/Orn_carbamoylTrfase"/>
</dbReference>
<dbReference type="InterPro" id="IPR036901">
    <property type="entry name" value="Asp/Orn_carbamoylTrfase_sf"/>
</dbReference>
<dbReference type="InterPro" id="IPR002082">
    <property type="entry name" value="Asp_carbamoyltransf"/>
</dbReference>
<dbReference type="InterPro" id="IPR006131">
    <property type="entry name" value="Asp_carbamoyltransf_Asp/Orn-bd"/>
</dbReference>
<dbReference type="NCBIfam" id="TIGR00670">
    <property type="entry name" value="asp_carb_tr"/>
    <property type="match status" value="1"/>
</dbReference>
<dbReference type="NCBIfam" id="NF002032">
    <property type="entry name" value="PRK00856.1"/>
    <property type="match status" value="1"/>
</dbReference>
<dbReference type="PANTHER" id="PTHR45753:SF6">
    <property type="entry name" value="ASPARTATE CARBAMOYLTRANSFERASE"/>
    <property type="match status" value="1"/>
</dbReference>
<dbReference type="PANTHER" id="PTHR45753">
    <property type="entry name" value="ORNITHINE CARBAMOYLTRANSFERASE, MITOCHONDRIAL"/>
    <property type="match status" value="1"/>
</dbReference>
<dbReference type="Pfam" id="PF00185">
    <property type="entry name" value="OTCace"/>
    <property type="match status" value="1"/>
</dbReference>
<dbReference type="Pfam" id="PF02729">
    <property type="entry name" value="OTCace_N"/>
    <property type="match status" value="1"/>
</dbReference>
<dbReference type="PRINTS" id="PR00100">
    <property type="entry name" value="AOTCASE"/>
</dbReference>
<dbReference type="PRINTS" id="PR00101">
    <property type="entry name" value="ATCASE"/>
</dbReference>
<dbReference type="SUPFAM" id="SSF53671">
    <property type="entry name" value="Aspartate/ornithine carbamoyltransferase"/>
    <property type="match status" value="1"/>
</dbReference>
<dbReference type="PROSITE" id="PS00097">
    <property type="entry name" value="CARBAMOYLTRANSFERASE"/>
    <property type="match status" value="1"/>
</dbReference>
<protein>
    <recommendedName>
        <fullName evidence="1">Aspartate carbamoyltransferase catalytic subunit</fullName>
        <ecNumber evidence="1">2.1.3.2</ecNumber>
    </recommendedName>
    <alternativeName>
        <fullName evidence="1">Aspartate transcarbamylase</fullName>
        <shortName evidence="1">ATCase</shortName>
    </alternativeName>
</protein>
<organism>
    <name type="scientific">Burkholderia thailandensis (strain ATCC 700388 / DSM 13276 / CCUG 48851 / CIP 106301 / E264)</name>
    <dbReference type="NCBI Taxonomy" id="271848"/>
    <lineage>
        <taxon>Bacteria</taxon>
        <taxon>Pseudomonadati</taxon>
        <taxon>Pseudomonadota</taxon>
        <taxon>Betaproteobacteria</taxon>
        <taxon>Burkholderiales</taxon>
        <taxon>Burkholderiaceae</taxon>
        <taxon>Burkholderia</taxon>
        <taxon>pseudomallei group</taxon>
    </lineage>
</organism>
<comment type="function">
    <text evidence="1">Catalyzes the condensation of carbamoyl phosphate and aspartate to form carbamoyl aspartate and inorganic phosphate, the committed step in the de novo pyrimidine nucleotide biosynthesis pathway.</text>
</comment>
<comment type="catalytic activity">
    <reaction evidence="1">
        <text>carbamoyl phosphate + L-aspartate = N-carbamoyl-L-aspartate + phosphate + H(+)</text>
        <dbReference type="Rhea" id="RHEA:20013"/>
        <dbReference type="ChEBI" id="CHEBI:15378"/>
        <dbReference type="ChEBI" id="CHEBI:29991"/>
        <dbReference type="ChEBI" id="CHEBI:32814"/>
        <dbReference type="ChEBI" id="CHEBI:43474"/>
        <dbReference type="ChEBI" id="CHEBI:58228"/>
        <dbReference type="EC" id="2.1.3.2"/>
    </reaction>
</comment>
<comment type="pathway">
    <text evidence="1">Pyrimidine metabolism; UMP biosynthesis via de novo pathway; (S)-dihydroorotate from bicarbonate: step 2/3.</text>
</comment>
<comment type="subunit">
    <text evidence="1">Heterododecamer (2C3:3R2) of six catalytic PyrB chains organized as two trimers (C3), and six regulatory PyrI chains organized as three dimers (R2).</text>
</comment>
<comment type="similarity">
    <text evidence="1">Belongs to the aspartate/ornithine carbamoyltransferase superfamily. ATCase family.</text>
</comment>
<evidence type="ECO:0000255" key="1">
    <source>
        <dbReference type="HAMAP-Rule" id="MF_00001"/>
    </source>
</evidence>
<name>PYRB_BURTA</name>
<accession>Q2SYI8</accession>
<sequence>MTTDTSGRTGAPAAAAPAERFRYGFLKGNPQLTKNGELKHLLTIEGLPRAILNQILDTAEQFVSVTDREVKKVPLLRGKSVFNLFFENSTRTRTTFEIAAKRLSADVINLNINASSTSKGESLLDTINNLSAMHADLFVVRHASSGAPYLIAEHCAPHVHVINAGDGRHAHPTQGLLDMYTIRHYKRDFTKLRVAIVGDILHSRVARSDIHALTTLGVPEVRAIGPRTLLPGGLEQMGVRVFHNLDEGLKDVDVIIMLRLQNERMSGALLPSAQEYFKSWGLTPERLALAAPDAIVMHPGPMNRGVEIDSQVADGPQSVILNQVTFGIAVRMAVMGIVAGTND</sequence>
<keyword id="KW-0665">Pyrimidine biosynthesis</keyword>
<keyword id="KW-0808">Transferase</keyword>
<proteinExistence type="inferred from homology"/>
<gene>
    <name evidence="1" type="primary">pyrB</name>
    <name type="ordered locus">BTH_I1465</name>
</gene>
<reference key="1">
    <citation type="journal article" date="2005" name="BMC Genomics">
        <title>Bacterial genome adaptation to niches: divergence of the potential virulence genes in three Burkholderia species of different survival strategies.</title>
        <authorList>
            <person name="Kim H.S."/>
            <person name="Schell M.A."/>
            <person name="Yu Y."/>
            <person name="Ulrich R.L."/>
            <person name="Sarria S.H."/>
            <person name="Nierman W.C."/>
            <person name="DeShazer D."/>
        </authorList>
    </citation>
    <scope>NUCLEOTIDE SEQUENCE [LARGE SCALE GENOMIC DNA]</scope>
    <source>
        <strain>ATCC 700388 / DSM 13276 / CCUG 48851 / CIP 106301 / E264</strain>
    </source>
</reference>
<feature type="chain" id="PRO_0000321080" description="Aspartate carbamoyltransferase catalytic subunit">
    <location>
        <begin position="1"/>
        <end position="343"/>
    </location>
</feature>
<feature type="binding site" evidence="1">
    <location>
        <position position="91"/>
    </location>
    <ligand>
        <name>carbamoyl phosphate</name>
        <dbReference type="ChEBI" id="CHEBI:58228"/>
    </ligand>
</feature>
<feature type="binding site" evidence="1">
    <location>
        <position position="92"/>
    </location>
    <ligand>
        <name>carbamoyl phosphate</name>
        <dbReference type="ChEBI" id="CHEBI:58228"/>
    </ligand>
</feature>
<feature type="binding site" evidence="1">
    <location>
        <position position="119"/>
    </location>
    <ligand>
        <name>L-aspartate</name>
        <dbReference type="ChEBI" id="CHEBI:29991"/>
    </ligand>
</feature>
<feature type="binding site" evidence="1">
    <location>
        <position position="141"/>
    </location>
    <ligand>
        <name>carbamoyl phosphate</name>
        <dbReference type="ChEBI" id="CHEBI:58228"/>
    </ligand>
</feature>
<feature type="binding site" evidence="1">
    <location>
        <position position="171"/>
    </location>
    <ligand>
        <name>carbamoyl phosphate</name>
        <dbReference type="ChEBI" id="CHEBI:58228"/>
    </ligand>
</feature>
<feature type="binding site" evidence="1">
    <location>
        <position position="174"/>
    </location>
    <ligand>
        <name>carbamoyl phosphate</name>
        <dbReference type="ChEBI" id="CHEBI:58228"/>
    </ligand>
</feature>
<feature type="binding site" evidence="1">
    <location>
        <position position="204"/>
    </location>
    <ligand>
        <name>L-aspartate</name>
        <dbReference type="ChEBI" id="CHEBI:29991"/>
    </ligand>
</feature>
<feature type="binding site" evidence="1">
    <location>
        <position position="259"/>
    </location>
    <ligand>
        <name>L-aspartate</name>
        <dbReference type="ChEBI" id="CHEBI:29991"/>
    </ligand>
</feature>
<feature type="binding site" evidence="1">
    <location>
        <position position="300"/>
    </location>
    <ligand>
        <name>carbamoyl phosphate</name>
        <dbReference type="ChEBI" id="CHEBI:58228"/>
    </ligand>
</feature>
<feature type="binding site" evidence="1">
    <location>
        <position position="301"/>
    </location>
    <ligand>
        <name>carbamoyl phosphate</name>
        <dbReference type="ChEBI" id="CHEBI:58228"/>
    </ligand>
</feature>